<name>RS12_LACH4</name>
<sequence>MPTINQLVRKGRHSKVTKSKSPALNYSYNSMKKESVFNPAPQMRGVATRVGTMTPKKPNSALRKYARVRLSNLIEVTAYIPGEGHNLQEHSVVLIRGGRVKDLPGVRYHIIRGALDTAGVDGRKQSRSKYGTKKD</sequence>
<feature type="chain" id="PRO_1000072257" description="Small ribosomal subunit protein uS12">
    <location>
        <begin position="1"/>
        <end position="135"/>
    </location>
</feature>
<feature type="region of interest" description="Disordered" evidence="3">
    <location>
        <begin position="1"/>
        <end position="20"/>
    </location>
</feature>
<feature type="compositionally biased region" description="Basic residues" evidence="3">
    <location>
        <begin position="9"/>
        <end position="18"/>
    </location>
</feature>
<feature type="modified residue" description="3-methylthioaspartic acid" evidence="1">
    <location>
        <position position="102"/>
    </location>
</feature>
<gene>
    <name evidence="2" type="primary">rpsL</name>
    <name type="ordered locus">lhv_0308</name>
</gene>
<keyword id="KW-0488">Methylation</keyword>
<keyword id="KW-0687">Ribonucleoprotein</keyword>
<keyword id="KW-0689">Ribosomal protein</keyword>
<keyword id="KW-0694">RNA-binding</keyword>
<keyword id="KW-0699">rRNA-binding</keyword>
<keyword id="KW-0820">tRNA-binding</keyword>
<accession>A8YXK1</accession>
<evidence type="ECO:0000250" key="1"/>
<evidence type="ECO:0000255" key="2">
    <source>
        <dbReference type="HAMAP-Rule" id="MF_00403"/>
    </source>
</evidence>
<evidence type="ECO:0000256" key="3">
    <source>
        <dbReference type="SAM" id="MobiDB-lite"/>
    </source>
</evidence>
<evidence type="ECO:0000305" key="4"/>
<proteinExistence type="inferred from homology"/>
<dbReference type="EMBL" id="CP000517">
    <property type="protein sequence ID" value="ABX26532.1"/>
    <property type="molecule type" value="Genomic_DNA"/>
</dbReference>
<dbReference type="RefSeq" id="WP_012211375.1">
    <property type="nucleotide sequence ID" value="NC_010080.1"/>
</dbReference>
<dbReference type="SMR" id="A8YXK1"/>
<dbReference type="GeneID" id="83725551"/>
<dbReference type="KEGG" id="lhe:lhv_0308"/>
<dbReference type="eggNOG" id="COG0048">
    <property type="taxonomic scope" value="Bacteria"/>
</dbReference>
<dbReference type="HOGENOM" id="CLU_104295_1_1_9"/>
<dbReference type="Proteomes" id="UP000000790">
    <property type="component" value="Chromosome"/>
</dbReference>
<dbReference type="GO" id="GO:0015935">
    <property type="term" value="C:small ribosomal subunit"/>
    <property type="evidence" value="ECO:0007669"/>
    <property type="project" value="InterPro"/>
</dbReference>
<dbReference type="GO" id="GO:0019843">
    <property type="term" value="F:rRNA binding"/>
    <property type="evidence" value="ECO:0007669"/>
    <property type="project" value="UniProtKB-UniRule"/>
</dbReference>
<dbReference type="GO" id="GO:0003735">
    <property type="term" value="F:structural constituent of ribosome"/>
    <property type="evidence" value="ECO:0007669"/>
    <property type="project" value="InterPro"/>
</dbReference>
<dbReference type="GO" id="GO:0000049">
    <property type="term" value="F:tRNA binding"/>
    <property type="evidence" value="ECO:0007669"/>
    <property type="project" value="UniProtKB-UniRule"/>
</dbReference>
<dbReference type="GO" id="GO:0006412">
    <property type="term" value="P:translation"/>
    <property type="evidence" value="ECO:0007669"/>
    <property type="project" value="UniProtKB-UniRule"/>
</dbReference>
<dbReference type="CDD" id="cd03368">
    <property type="entry name" value="Ribosomal_S12"/>
    <property type="match status" value="1"/>
</dbReference>
<dbReference type="FunFam" id="2.40.50.140:FF:000001">
    <property type="entry name" value="30S ribosomal protein S12"/>
    <property type="match status" value="1"/>
</dbReference>
<dbReference type="Gene3D" id="2.40.50.140">
    <property type="entry name" value="Nucleic acid-binding proteins"/>
    <property type="match status" value="1"/>
</dbReference>
<dbReference type="HAMAP" id="MF_00403_B">
    <property type="entry name" value="Ribosomal_uS12_B"/>
    <property type="match status" value="1"/>
</dbReference>
<dbReference type="InterPro" id="IPR012340">
    <property type="entry name" value="NA-bd_OB-fold"/>
</dbReference>
<dbReference type="InterPro" id="IPR006032">
    <property type="entry name" value="Ribosomal_uS12"/>
</dbReference>
<dbReference type="InterPro" id="IPR005679">
    <property type="entry name" value="Ribosomal_uS12_bac"/>
</dbReference>
<dbReference type="NCBIfam" id="TIGR00981">
    <property type="entry name" value="rpsL_bact"/>
    <property type="match status" value="1"/>
</dbReference>
<dbReference type="PANTHER" id="PTHR11652">
    <property type="entry name" value="30S RIBOSOMAL PROTEIN S12 FAMILY MEMBER"/>
    <property type="match status" value="1"/>
</dbReference>
<dbReference type="Pfam" id="PF00164">
    <property type="entry name" value="Ribosom_S12_S23"/>
    <property type="match status" value="1"/>
</dbReference>
<dbReference type="PIRSF" id="PIRSF002133">
    <property type="entry name" value="Ribosomal_S12/S23"/>
    <property type="match status" value="1"/>
</dbReference>
<dbReference type="PRINTS" id="PR01034">
    <property type="entry name" value="RIBOSOMALS12"/>
</dbReference>
<dbReference type="SUPFAM" id="SSF50249">
    <property type="entry name" value="Nucleic acid-binding proteins"/>
    <property type="match status" value="1"/>
</dbReference>
<dbReference type="PROSITE" id="PS00055">
    <property type="entry name" value="RIBOSOMAL_S12"/>
    <property type="match status" value="1"/>
</dbReference>
<protein>
    <recommendedName>
        <fullName evidence="2">Small ribosomal subunit protein uS12</fullName>
    </recommendedName>
    <alternativeName>
        <fullName evidence="4">30S ribosomal protein S12</fullName>
    </alternativeName>
</protein>
<organism>
    <name type="scientific">Lactobacillus helveticus (strain DPC 4571)</name>
    <dbReference type="NCBI Taxonomy" id="405566"/>
    <lineage>
        <taxon>Bacteria</taxon>
        <taxon>Bacillati</taxon>
        <taxon>Bacillota</taxon>
        <taxon>Bacilli</taxon>
        <taxon>Lactobacillales</taxon>
        <taxon>Lactobacillaceae</taxon>
        <taxon>Lactobacillus</taxon>
    </lineage>
</organism>
<comment type="function">
    <text evidence="2">With S4 and S5 plays an important role in translational accuracy.</text>
</comment>
<comment type="function">
    <text evidence="2">Interacts with and stabilizes bases of the 16S rRNA that are involved in tRNA selection in the A site and with the mRNA backbone. Located at the interface of the 30S and 50S subunits, it traverses the body of the 30S subunit contacting proteins on the other side and probably holding the rRNA structure together. The combined cluster of proteins S8, S12 and S17 appears to hold together the shoulder and platform of the 30S subunit.</text>
</comment>
<comment type="subunit">
    <text evidence="2">Part of the 30S ribosomal subunit. Contacts proteins S8 and S17. May interact with IF1 in the 30S initiation complex.</text>
</comment>
<comment type="similarity">
    <text evidence="2">Belongs to the universal ribosomal protein uS12 family.</text>
</comment>
<reference key="1">
    <citation type="journal article" date="2008" name="J. Bacteriol.">
        <title>Genome sequence of Lactobacillus helveticus: an organism distinguished by selective gene loss and IS element expansion.</title>
        <authorList>
            <person name="Callanan M."/>
            <person name="Kaleta P."/>
            <person name="O'Callaghan J."/>
            <person name="O'Sullivan O."/>
            <person name="Jordan K."/>
            <person name="McAuliffe O."/>
            <person name="Sangrador-Vegas A."/>
            <person name="Slattery L."/>
            <person name="Fitzgerald G.F."/>
            <person name="Beresford T."/>
            <person name="Ross R.P."/>
        </authorList>
    </citation>
    <scope>NUCLEOTIDE SEQUENCE [LARGE SCALE GENOMIC DNA]</scope>
    <source>
        <strain>DPC 4571</strain>
    </source>
</reference>